<accession>Q01758</accession>
<reference key="1">
    <citation type="journal article" date="1992" name="Biochem. Biophys. Res. Commun.">
        <title>Structural and functional similarity between fish antifreeze proteins and calcium-dependent lectins.</title>
        <authorList>
            <person name="Ewart K.V."/>
            <person name="Rubinsky B."/>
            <person name="Fletcher G.L."/>
        </authorList>
    </citation>
    <scope>NUCLEOTIDE SEQUENCE [MRNA]</scope>
    <scope>PROTEIN SEQUENCE OF 49-65; 69-78; 145-154 AND 161-173</scope>
    <source>
        <tissue>Liver</tissue>
    </source>
</reference>
<name>ISP2_OSMMO</name>
<comment type="function">
    <text>Antifreeze proteins lower the blood freezing point.</text>
</comment>
<comment type="subcellular location">
    <subcellularLocation>
        <location>Secreted</location>
    </subcellularLocation>
</comment>
<sequence>MLAALLVCAMVALTRAANGDTGKEAVMTGSSGKNLTECPTDWKMFNGRCFLFNPLQLHWAHAQISCMKDGANLASIHSLEEYAFVKELTTAGLIPAWIGGSDCHVSTYWFWMDSTSMDFTDWCAAQPDFTLTECCIQINVGVGKCWNDTPCTHLHASVCAKPATVIPEVTPPSIM</sequence>
<protein>
    <recommendedName>
        <fullName>Type-2 ice-structuring protein</fullName>
    </recommendedName>
    <alternativeName>
        <fullName>Type II antifreeze protein</fullName>
        <shortName>AFP</shortName>
    </alternativeName>
</protein>
<dbReference type="EMBL" id="M96154">
    <property type="protein sequence ID" value="AAA49442.1"/>
    <property type="molecule type" value="mRNA"/>
</dbReference>
<dbReference type="PIR" id="JH0626">
    <property type="entry name" value="JH0626"/>
</dbReference>
<dbReference type="RefSeq" id="XP_067101371.1">
    <property type="nucleotide sequence ID" value="XM_067245270.1"/>
</dbReference>
<dbReference type="SMR" id="Q01758"/>
<dbReference type="GeneID" id="136950799"/>
<dbReference type="GO" id="GO:0005576">
    <property type="term" value="C:extracellular region"/>
    <property type="evidence" value="ECO:0007669"/>
    <property type="project" value="UniProtKB-SubCell"/>
</dbReference>
<dbReference type="GO" id="GO:0030246">
    <property type="term" value="F:carbohydrate binding"/>
    <property type="evidence" value="ECO:0007669"/>
    <property type="project" value="UniProtKB-KW"/>
</dbReference>
<dbReference type="CDD" id="cd00037">
    <property type="entry name" value="CLECT"/>
    <property type="match status" value="1"/>
</dbReference>
<dbReference type="Gene3D" id="3.10.100.10">
    <property type="entry name" value="Mannose-Binding Protein A, subunit A"/>
    <property type="match status" value="1"/>
</dbReference>
<dbReference type="InterPro" id="IPR002353">
    <property type="entry name" value="AntifreezeII"/>
</dbReference>
<dbReference type="InterPro" id="IPR001304">
    <property type="entry name" value="C-type_lectin-like"/>
</dbReference>
<dbReference type="InterPro" id="IPR016186">
    <property type="entry name" value="C-type_lectin-like/link_sf"/>
</dbReference>
<dbReference type="InterPro" id="IPR050111">
    <property type="entry name" value="C-type_lectin/snaclec_domain"/>
</dbReference>
<dbReference type="InterPro" id="IPR018378">
    <property type="entry name" value="C-type_lectin_CS"/>
</dbReference>
<dbReference type="InterPro" id="IPR016187">
    <property type="entry name" value="CTDL_fold"/>
</dbReference>
<dbReference type="PANTHER" id="PTHR22803">
    <property type="entry name" value="MANNOSE, PHOSPHOLIPASE, LECTIN RECEPTOR RELATED"/>
    <property type="match status" value="1"/>
</dbReference>
<dbReference type="Pfam" id="PF00059">
    <property type="entry name" value="Lectin_C"/>
    <property type="match status" value="1"/>
</dbReference>
<dbReference type="PRINTS" id="PR00356">
    <property type="entry name" value="ANTIFREEZEII"/>
</dbReference>
<dbReference type="SMART" id="SM00034">
    <property type="entry name" value="CLECT"/>
    <property type="match status" value="1"/>
</dbReference>
<dbReference type="SUPFAM" id="SSF56436">
    <property type="entry name" value="C-type lectin-like"/>
    <property type="match status" value="1"/>
</dbReference>
<dbReference type="PROSITE" id="PS00615">
    <property type="entry name" value="C_TYPE_LECTIN_1"/>
    <property type="match status" value="1"/>
</dbReference>
<dbReference type="PROSITE" id="PS50041">
    <property type="entry name" value="C_TYPE_LECTIN_2"/>
    <property type="match status" value="1"/>
</dbReference>
<proteinExistence type="evidence at protein level"/>
<evidence type="ECO:0000255" key="1"/>
<evidence type="ECO:0000255" key="2">
    <source>
        <dbReference type="PROSITE-ProRule" id="PRU00040"/>
    </source>
</evidence>
<feature type="signal peptide" evidence="1">
    <location>
        <begin position="1"/>
        <end position="16"/>
    </location>
</feature>
<feature type="propeptide" id="PRO_0000017546" evidence="1">
    <location>
        <begin position="17"/>
        <end position="33"/>
    </location>
</feature>
<feature type="chain" id="PRO_0000017547" description="Type-2 ice-structuring protein">
    <location>
        <begin position="34"/>
        <end position="175"/>
    </location>
</feature>
<feature type="domain" description="C-type lectin" evidence="2">
    <location>
        <begin position="36"/>
        <end position="163"/>
    </location>
</feature>
<feature type="disulfide bond" evidence="2">
    <location>
        <begin position="38"/>
        <end position="49"/>
    </location>
</feature>
<feature type="disulfide bond" evidence="2">
    <location>
        <begin position="66"/>
        <end position="159"/>
    </location>
</feature>
<feature type="disulfide bond" evidence="2">
    <location>
        <begin position="103"/>
        <end position="134"/>
    </location>
</feature>
<feature type="disulfide bond" evidence="2">
    <location>
        <begin position="123"/>
        <end position="145"/>
    </location>
</feature>
<feature type="disulfide bond" evidence="2">
    <location>
        <begin position="135"/>
        <end position="151"/>
    </location>
</feature>
<organism>
    <name type="scientific">Osmerus mordax</name>
    <name type="common">Rainbow smelt</name>
    <name type="synonym">Atherina mordax</name>
    <dbReference type="NCBI Taxonomy" id="8014"/>
    <lineage>
        <taxon>Eukaryota</taxon>
        <taxon>Metazoa</taxon>
        <taxon>Chordata</taxon>
        <taxon>Craniata</taxon>
        <taxon>Vertebrata</taxon>
        <taxon>Euteleostomi</taxon>
        <taxon>Actinopterygii</taxon>
        <taxon>Neopterygii</taxon>
        <taxon>Teleostei</taxon>
        <taxon>Stomiati</taxon>
        <taxon>Osmeriformes</taxon>
        <taxon>Osmeridae</taxon>
        <taxon>Osmerus</taxon>
    </lineage>
</organism>
<keyword id="KW-0047">Antifreeze protein</keyword>
<keyword id="KW-0903">Direct protein sequencing</keyword>
<keyword id="KW-1015">Disulfide bond</keyword>
<keyword id="KW-0430">Lectin</keyword>
<keyword id="KW-0964">Secreted</keyword>
<keyword id="KW-0732">Signal</keyword>